<protein>
    <recommendedName>
        <fullName>Carboxysome assembly protein CsoS2</fullName>
    </recommendedName>
    <alternativeName>
        <fullName evidence="4">Carboxysome shell protein CsoS2</fullName>
    </alternativeName>
</protein>
<comment type="function">
    <text evidence="1">Required for alpha-carboxysome (Cb) assembly, mediates interaction between RuBisCO and the Cb shell. The protein is probably intrinsically disordered. The C-terminal repeats act as the encapsulation signal to target proteins to the Cb; they are necessary and sufficient to target both CsoS2 and foreign proteins to the Cb. The N-terminal repeats of this protein bind simultaneously to both subunits of RuBisCO. Probably also interacts with the major shell proteins (CsoS1); that interaction would increase the local concentration of CsoS2 so that it can condense RuBisCO and full carboxysomes can be formed.</text>
</comment>
<comment type="subunit">
    <text evidence="1">Interacts via its N-terminal repeats with RuBisCO. Interacts with the major shell protein CsoS1.</text>
</comment>
<comment type="subcellular location">
    <subcellularLocation>
        <location evidence="7">Carboxysome</location>
    </subcellularLocation>
    <text evidence="5">This bacterium makes alpha-type carboxysomes.</text>
</comment>
<comment type="induction">
    <text evidence="3">Induced by growth in low levels of dissolved inorganic carbon (at protein level).</text>
</comment>
<comment type="domain">
    <text evidence="1">Has 3 domains; the N-terminal domain has 3 short repeats and binds RuBisCO. The central region has 5 longer repeats. The C-terminal domain has 1 repeat (compared to orthologs) and a highly conserved C-terminal peptide. The C-repeat serves as the encapsulation signal for the alpha-carboxysome, and is able to target foreign proteins to this organelle.</text>
</comment>
<comment type="PTM">
    <text evidence="6">Unlike H.neapolitanus and predictions for P.marinus strain MIT 9313, this protein is not thought to have ribosomal frameshifting.</text>
</comment>
<comment type="similarity">
    <text evidence="5">Belongs to the CsoS2 family.</text>
</comment>
<gene>
    <name evidence="4" type="primary">csoS2</name>
    <name type="ordered locus">Tcr_0840</name>
</gene>
<reference key="1">
    <citation type="journal article" date="2006" name="PLoS Biol.">
        <title>The genome of deep-sea vent chemolithoautotroph Thiomicrospira crunogena XCL-2.</title>
        <authorList>
            <person name="Scott K.M."/>
            <person name="Sievert S.M."/>
            <person name="Abril F.N."/>
            <person name="Ball L.A."/>
            <person name="Barrett C.J."/>
            <person name="Blake R.A."/>
            <person name="Boller A.J."/>
            <person name="Chain P.S.G."/>
            <person name="Clark J.A."/>
            <person name="Davis C.R."/>
            <person name="Detter C."/>
            <person name="Do K.F."/>
            <person name="Dobrinski K.P."/>
            <person name="Faza B.I."/>
            <person name="Fitzpatrick K.A."/>
            <person name="Freyermuth S.K."/>
            <person name="Harmer T.L."/>
            <person name="Hauser L.J."/>
            <person name="Huegler M."/>
            <person name="Kerfeld C.A."/>
            <person name="Klotz M.G."/>
            <person name="Kong W.W."/>
            <person name="Land M."/>
            <person name="Lapidus A."/>
            <person name="Larimer F.W."/>
            <person name="Longo D.L."/>
            <person name="Lucas S."/>
            <person name="Malfatti S.A."/>
            <person name="Massey S.E."/>
            <person name="Martin D.D."/>
            <person name="McCuddin Z."/>
            <person name="Meyer F."/>
            <person name="Moore J.L."/>
            <person name="Ocampo L.H. Jr."/>
            <person name="Paul J.H."/>
            <person name="Paulsen I.T."/>
            <person name="Reep D.K."/>
            <person name="Ren Q."/>
            <person name="Ross R.L."/>
            <person name="Sato P.Y."/>
            <person name="Thomas P."/>
            <person name="Tinkham L.E."/>
            <person name="Zeruth G.T."/>
        </authorList>
    </citation>
    <scope>NUCLEOTIDE SEQUENCE [LARGE SCALE GENOMIC DNA]</scope>
    <source>
        <strain>DSM 25203 / XCL-2</strain>
    </source>
</reference>
<reference key="2">
    <citation type="journal article" date="2016" name="J. Mol. Biol.">
        <title>Programmed Ribosomal Frameshifting Mediates Expression of the alpha-Carboxysome.</title>
        <authorList>
            <person name="Chaijarasphong T."/>
            <person name="Nichols R.J."/>
            <person name="Kortright K.E."/>
            <person name="Nixon C.F."/>
            <person name="Teng P.K."/>
            <person name="Oltrogge L.M."/>
            <person name="Savage D.F."/>
        </authorList>
    </citation>
    <scope>PROBABLY NO RIBOSOMAL FRAMESHIFT</scope>
</reference>
<reference key="3">
    <citation type="journal article" date="2017" name="J. Bacteriol.">
        <title>Proteomic and Mutant Analysis of the CO2 Concentrating Mechanism of Hydrothermal Vent Chemolithoautotroph Thiomicrospira crunogena.</title>
        <authorList>
            <consortium name="USF MCB4404L"/>
            <person name="Mangiapia M."/>
            <person name="Brown T.W."/>
            <person name="Chaput D."/>
            <person name="Haller E."/>
            <person name="Harmer T.L."/>
            <person name="Hashemy Z."/>
            <person name="Keeley R."/>
            <person name="Leonard J."/>
            <person name="Mancera P."/>
            <person name="Nicholson D."/>
            <person name="Stevens S."/>
            <person name="Wanjugi P."/>
            <person name="Zabinski T."/>
            <person name="Pan C."/>
            <person name="Scott K.M."/>
        </authorList>
    </citation>
    <scope>SUBCELLULAR LOCATION</scope>
    <scope>INDUCTION</scope>
    <source>
        <strain>DSM 25203 / XCL-2</strain>
    </source>
</reference>
<evidence type="ECO:0000250" key="1">
    <source>
        <dbReference type="UniProtKB" id="O85041"/>
    </source>
</evidence>
<evidence type="ECO:0000256" key="2">
    <source>
        <dbReference type="SAM" id="MobiDB-lite"/>
    </source>
</evidence>
<evidence type="ECO:0000269" key="3">
    <source>
    </source>
</evidence>
<evidence type="ECO:0000303" key="4">
    <source>
    </source>
</evidence>
<evidence type="ECO:0000305" key="5"/>
<evidence type="ECO:0000305" key="6">
    <source>
    </source>
</evidence>
<evidence type="ECO:0000305" key="7">
    <source>
    </source>
</evidence>
<proteinExistence type="evidence at protein level"/>
<keyword id="KW-1283">Bacterial microcompartment</keyword>
<keyword id="KW-0120">Carbon dioxide fixation</keyword>
<keyword id="KW-1282">Carboxysome</keyword>
<keyword id="KW-0677">Repeat</keyword>
<name>CSOS2_HYDCU</name>
<accession>Q31HD7</accession>
<feature type="chain" id="PRO_0000452068" description="Carboxysome assembly protein CsoS2">
    <location>
        <begin position="1"/>
        <end position="662"/>
    </location>
</feature>
<feature type="repeat" description="N-repeat 1" evidence="1">
    <location>
        <begin position="8"/>
        <end position="27"/>
    </location>
</feature>
<feature type="repeat" description="N-repeat 2" evidence="1">
    <location>
        <begin position="58"/>
        <end position="72"/>
    </location>
</feature>
<feature type="repeat" description="N-repeat 3" evidence="1">
    <location>
        <begin position="147"/>
        <end position="168"/>
    </location>
</feature>
<feature type="repeat" description="M-repeat 1" evidence="1">
    <location>
        <begin position="228"/>
        <end position="278"/>
    </location>
</feature>
<feature type="repeat" description="M-repeat 2" evidence="1">
    <location>
        <begin position="288"/>
        <end position="338"/>
    </location>
</feature>
<feature type="repeat" description="M-repeat 3" evidence="1">
    <location>
        <begin position="388"/>
        <end position="436"/>
    </location>
</feature>
<feature type="repeat" description="M-repeat 4" evidence="1">
    <location>
        <begin position="446"/>
        <end position="491"/>
    </location>
</feature>
<feature type="repeat" description="M-repeat 5" evidence="1">
    <location>
        <begin position="496"/>
        <end position="550"/>
    </location>
</feature>
<feature type="repeat" description="C-repeat 1" evidence="1">
    <location>
        <begin position="564"/>
        <end position="572"/>
    </location>
</feature>
<feature type="region of interest" description="Disordered" evidence="2">
    <location>
        <begin position="1"/>
        <end position="258"/>
    </location>
</feature>
<feature type="region of interest" description="N-terminal domain" evidence="1">
    <location>
        <begin position="1"/>
        <end position="227"/>
    </location>
</feature>
<feature type="region of interest" description="Middle region" evidence="1">
    <location>
        <begin position="228"/>
        <end position="559"/>
    </location>
</feature>
<feature type="region of interest" description="Disordered" evidence="2">
    <location>
        <begin position="277"/>
        <end position="322"/>
    </location>
</feature>
<feature type="region of interest" description="Disordered" evidence="2">
    <location>
        <begin position="342"/>
        <end position="419"/>
    </location>
</feature>
<feature type="region of interest" description="C-terminal domain" evidence="1">
    <location>
        <begin position="560"/>
        <end position="631"/>
    </location>
</feature>
<feature type="region of interest" description="Disordered" evidence="2">
    <location>
        <begin position="588"/>
        <end position="607"/>
    </location>
</feature>
<feature type="region of interest" description="Disordered" evidence="2">
    <location>
        <begin position="619"/>
        <end position="662"/>
    </location>
</feature>
<feature type="region of interest" description="C-terminal peptide" evidence="1">
    <location>
        <begin position="632"/>
        <end position="662"/>
    </location>
</feature>
<feature type="compositionally biased region" description="Low complexity" evidence="2">
    <location>
        <begin position="28"/>
        <end position="57"/>
    </location>
</feature>
<feature type="compositionally biased region" description="Low complexity" evidence="2">
    <location>
        <begin position="64"/>
        <end position="76"/>
    </location>
</feature>
<feature type="compositionally biased region" description="Basic and acidic residues" evidence="2">
    <location>
        <begin position="120"/>
        <end position="135"/>
    </location>
</feature>
<feature type="compositionally biased region" description="Polar residues" evidence="2">
    <location>
        <begin position="141"/>
        <end position="150"/>
    </location>
</feature>
<feature type="compositionally biased region" description="Low complexity" evidence="2">
    <location>
        <begin position="161"/>
        <end position="170"/>
    </location>
</feature>
<feature type="compositionally biased region" description="Low complexity" evidence="2">
    <location>
        <begin position="237"/>
        <end position="247"/>
    </location>
</feature>
<feature type="compositionally biased region" description="Low complexity" evidence="2">
    <location>
        <begin position="289"/>
        <end position="300"/>
    </location>
</feature>
<feature type="compositionally biased region" description="Polar residues" evidence="2">
    <location>
        <begin position="391"/>
        <end position="404"/>
    </location>
</feature>
<feature type="compositionally biased region" description="Polar residues" evidence="2">
    <location>
        <begin position="641"/>
        <end position="650"/>
    </location>
</feature>
<organism>
    <name type="scientific">Hydrogenovibrio crunogenus (strain DSM 25203 / XCL-2)</name>
    <name type="common">Thiomicrospira crunogena</name>
    <dbReference type="NCBI Taxonomy" id="317025"/>
    <lineage>
        <taxon>Bacteria</taxon>
        <taxon>Pseudomonadati</taxon>
        <taxon>Pseudomonadota</taxon>
        <taxon>Gammaproteobacteria</taxon>
        <taxon>Thiotrichales</taxon>
        <taxon>Piscirickettsiaceae</taxon>
        <taxon>Hydrogenovibrio</taxon>
    </lineage>
</organism>
<sequence length="662" mass="68177">MSTSNAQSGRAAAIARRNAQVKGKGYTASAAPAAPRKPAAPVAEPVVAAAPAPSQPSRSRRKVSVAPTATPAASAAGREAAKLKRQQQKNGKSSAGAANAMPHPKAKAKQKPEEPIVEPRQAKAEKPTKRSERRTGVKPQVASQQPSGRLQSKAYRKAQAKGKAGQEAFKSNGSSQSGAKAKLANPDASTREIAQQVRAERCAQGKTCSTGGSRPMRKRRNAKEAPQKVGESQTLHGQSVSGTQVGQGEKKMTGSESGACQLVSGTEYLGAEEFSKNCDVQPTPQPAKVTQTQTTRGQVVSGSTKVGRSDKMTGNETGTCSAITGTEYLPADQSKMYCGETPAKSKATGFSVMSQATQKSEQKVTGGDSRKSQSTTFKPKNPASAPHKVMPSQTAKGNTTTGSQVGRLESVTGGERGSCHAVTGTGYQGAEEAKACDMPMTETADKVTASGTAGGQKVTGDRSGAYYGMTGAEAGDCKTITGTSYTGTEQFQFCSVDEQNEMKVRQRKGANPSISGVQPGPQGLTGAQKGACELVTGSHYQGGDQTAMVCDSTNAAAPGESDFPAMIGQAQPAFSTNEVEPMVDEGSKITGDGWDRGSKVTGTDGPWAAQRNASIRGVAGQSPMGASQYRPVNNEVPMSPITGSSGNTDTGAKVTLSGGARA</sequence>
<dbReference type="EMBL" id="CP000109">
    <property type="protein sequence ID" value="ABB41436.1"/>
    <property type="molecule type" value="Genomic_DNA"/>
</dbReference>
<dbReference type="STRING" id="317025.Tcr_0840"/>
<dbReference type="KEGG" id="tcx:Tcr_0840"/>
<dbReference type="eggNOG" id="ENOG502Z8T4">
    <property type="taxonomic scope" value="Bacteria"/>
</dbReference>
<dbReference type="HOGENOM" id="CLU_016451_0_0_6"/>
<dbReference type="OrthoDB" id="543713at2"/>
<dbReference type="GO" id="GO:0031470">
    <property type="term" value="C:carboxysome"/>
    <property type="evidence" value="ECO:0007669"/>
    <property type="project" value="UniProtKB-SubCell"/>
</dbReference>
<dbReference type="GO" id="GO:0043886">
    <property type="term" value="F:structural constituent of carboxysome shell"/>
    <property type="evidence" value="ECO:0007669"/>
    <property type="project" value="InterPro"/>
</dbReference>
<dbReference type="GO" id="GO:0015977">
    <property type="term" value="P:carbon fixation"/>
    <property type="evidence" value="ECO:0007669"/>
    <property type="project" value="UniProtKB-KW"/>
</dbReference>
<dbReference type="InterPro" id="IPR020990">
    <property type="entry name" value="CSOS2/2B"/>
</dbReference>
<dbReference type="Pfam" id="PF12288">
    <property type="entry name" value="CsoS2_M"/>
    <property type="match status" value="1"/>
</dbReference>